<gene>
    <name evidence="1" type="primary">ilvC</name>
    <name type="ordered locus">PBPRA0085</name>
</gene>
<feature type="chain" id="PRO_0000151337" description="Ketol-acid reductoisomerase (NADP(+))">
    <location>
        <begin position="1"/>
        <end position="494"/>
    </location>
</feature>
<feature type="domain" description="KARI N-terminal Rossmann" evidence="2">
    <location>
        <begin position="14"/>
        <end position="208"/>
    </location>
</feature>
<feature type="domain" description="KARI C-terminal knotted 1" evidence="3">
    <location>
        <begin position="209"/>
        <end position="344"/>
    </location>
</feature>
<feature type="domain" description="KARI C-terminal knotted 2" evidence="3">
    <location>
        <begin position="345"/>
        <end position="487"/>
    </location>
</feature>
<feature type="active site" evidence="1">
    <location>
        <position position="132"/>
    </location>
</feature>
<feature type="binding site" evidence="1">
    <location>
        <begin position="45"/>
        <end position="48"/>
    </location>
    <ligand>
        <name>NADP(+)</name>
        <dbReference type="ChEBI" id="CHEBI:58349"/>
    </ligand>
</feature>
<feature type="binding site" evidence="1">
    <location>
        <position position="68"/>
    </location>
    <ligand>
        <name>NADP(+)</name>
        <dbReference type="ChEBI" id="CHEBI:58349"/>
    </ligand>
</feature>
<feature type="binding site" evidence="1">
    <location>
        <position position="76"/>
    </location>
    <ligand>
        <name>NADP(+)</name>
        <dbReference type="ChEBI" id="CHEBI:58349"/>
    </ligand>
</feature>
<feature type="binding site" evidence="1">
    <location>
        <position position="78"/>
    </location>
    <ligand>
        <name>NADP(+)</name>
        <dbReference type="ChEBI" id="CHEBI:58349"/>
    </ligand>
</feature>
<feature type="binding site" evidence="1">
    <location>
        <begin position="108"/>
        <end position="110"/>
    </location>
    <ligand>
        <name>NADP(+)</name>
        <dbReference type="ChEBI" id="CHEBI:58349"/>
    </ligand>
</feature>
<feature type="binding site" evidence="1">
    <location>
        <position position="158"/>
    </location>
    <ligand>
        <name>NADP(+)</name>
        <dbReference type="ChEBI" id="CHEBI:58349"/>
    </ligand>
</feature>
<feature type="binding site" evidence="1">
    <location>
        <position position="217"/>
    </location>
    <ligand>
        <name>Mg(2+)</name>
        <dbReference type="ChEBI" id="CHEBI:18420"/>
        <label>1</label>
    </ligand>
</feature>
<feature type="binding site" evidence="1">
    <location>
        <position position="217"/>
    </location>
    <ligand>
        <name>Mg(2+)</name>
        <dbReference type="ChEBI" id="CHEBI:18420"/>
        <label>2</label>
    </ligand>
</feature>
<feature type="binding site" evidence="1">
    <location>
        <position position="221"/>
    </location>
    <ligand>
        <name>Mg(2+)</name>
        <dbReference type="ChEBI" id="CHEBI:18420"/>
        <label>1</label>
    </ligand>
</feature>
<feature type="binding site" evidence="1">
    <location>
        <position position="389"/>
    </location>
    <ligand>
        <name>Mg(2+)</name>
        <dbReference type="ChEBI" id="CHEBI:18420"/>
        <label>2</label>
    </ligand>
</feature>
<feature type="binding site" evidence="1">
    <location>
        <position position="393"/>
    </location>
    <ligand>
        <name>Mg(2+)</name>
        <dbReference type="ChEBI" id="CHEBI:18420"/>
        <label>2</label>
    </ligand>
</feature>
<feature type="binding site" evidence="1">
    <location>
        <position position="414"/>
    </location>
    <ligand>
        <name>substrate</name>
    </ligand>
</feature>
<name>ILVC_PHOPR</name>
<dbReference type="EC" id="1.1.1.86" evidence="1"/>
<dbReference type="EMBL" id="CR378663">
    <property type="protein sequence ID" value="CAG18530.1"/>
    <property type="molecule type" value="Genomic_DNA"/>
</dbReference>
<dbReference type="RefSeq" id="WP_011216909.1">
    <property type="nucleotide sequence ID" value="NC_006370.1"/>
</dbReference>
<dbReference type="SMR" id="Q6LVZ5"/>
<dbReference type="STRING" id="298386.PBPRA0085"/>
<dbReference type="KEGG" id="ppr:PBPRA0085"/>
<dbReference type="eggNOG" id="COG0059">
    <property type="taxonomic scope" value="Bacteria"/>
</dbReference>
<dbReference type="HOGENOM" id="CLU_551905_0_0_6"/>
<dbReference type="UniPathway" id="UPA00047">
    <property type="reaction ID" value="UER00056"/>
</dbReference>
<dbReference type="UniPathway" id="UPA00049">
    <property type="reaction ID" value="UER00060"/>
</dbReference>
<dbReference type="Proteomes" id="UP000000593">
    <property type="component" value="Chromosome 1"/>
</dbReference>
<dbReference type="GO" id="GO:0005829">
    <property type="term" value="C:cytosol"/>
    <property type="evidence" value="ECO:0007669"/>
    <property type="project" value="TreeGrafter"/>
</dbReference>
<dbReference type="GO" id="GO:0004455">
    <property type="term" value="F:ketol-acid reductoisomerase activity"/>
    <property type="evidence" value="ECO:0007669"/>
    <property type="project" value="UniProtKB-UniRule"/>
</dbReference>
<dbReference type="GO" id="GO:0000287">
    <property type="term" value="F:magnesium ion binding"/>
    <property type="evidence" value="ECO:0007669"/>
    <property type="project" value="UniProtKB-UniRule"/>
</dbReference>
<dbReference type="GO" id="GO:0009097">
    <property type="term" value="P:isoleucine biosynthetic process"/>
    <property type="evidence" value="ECO:0007669"/>
    <property type="project" value="UniProtKB-UniRule"/>
</dbReference>
<dbReference type="GO" id="GO:0009099">
    <property type="term" value="P:L-valine biosynthetic process"/>
    <property type="evidence" value="ECO:0007669"/>
    <property type="project" value="UniProtKB-UniRule"/>
</dbReference>
<dbReference type="FunFam" id="1.10.1040.10:FF:000007">
    <property type="entry name" value="Ketol-acid reductoisomerase (NADP(+))"/>
    <property type="match status" value="1"/>
</dbReference>
<dbReference type="FunFam" id="3.40.50.720:FF:000043">
    <property type="entry name" value="Ketol-acid reductoisomerase (NADP(+))"/>
    <property type="match status" value="1"/>
</dbReference>
<dbReference type="Gene3D" id="1.10.1040.10">
    <property type="entry name" value="N-(1-d-carboxylethyl)-l-norvaline Dehydrogenase, domain 2"/>
    <property type="match status" value="1"/>
</dbReference>
<dbReference type="Gene3D" id="3.40.50.720">
    <property type="entry name" value="NAD(P)-binding Rossmann-like Domain"/>
    <property type="match status" value="1"/>
</dbReference>
<dbReference type="HAMAP" id="MF_00435">
    <property type="entry name" value="IlvC"/>
    <property type="match status" value="1"/>
</dbReference>
<dbReference type="InterPro" id="IPR008927">
    <property type="entry name" value="6-PGluconate_DH-like_C_sf"/>
</dbReference>
<dbReference type="InterPro" id="IPR013328">
    <property type="entry name" value="6PGD_dom2"/>
</dbReference>
<dbReference type="InterPro" id="IPR013023">
    <property type="entry name" value="KARI"/>
</dbReference>
<dbReference type="InterPro" id="IPR000506">
    <property type="entry name" value="KARI_C"/>
</dbReference>
<dbReference type="InterPro" id="IPR013116">
    <property type="entry name" value="KARI_N"/>
</dbReference>
<dbReference type="InterPro" id="IPR036291">
    <property type="entry name" value="NAD(P)-bd_dom_sf"/>
</dbReference>
<dbReference type="NCBIfam" id="TIGR00465">
    <property type="entry name" value="ilvC"/>
    <property type="match status" value="1"/>
</dbReference>
<dbReference type="NCBIfam" id="NF003557">
    <property type="entry name" value="PRK05225.1"/>
    <property type="match status" value="1"/>
</dbReference>
<dbReference type="PANTHER" id="PTHR21371">
    <property type="entry name" value="KETOL-ACID REDUCTOISOMERASE, MITOCHONDRIAL"/>
    <property type="match status" value="1"/>
</dbReference>
<dbReference type="PANTHER" id="PTHR21371:SF1">
    <property type="entry name" value="KETOL-ACID REDUCTOISOMERASE, MITOCHONDRIAL"/>
    <property type="match status" value="1"/>
</dbReference>
<dbReference type="Pfam" id="PF01450">
    <property type="entry name" value="KARI_C"/>
    <property type="match status" value="2"/>
</dbReference>
<dbReference type="Pfam" id="PF07991">
    <property type="entry name" value="KARI_N"/>
    <property type="match status" value="1"/>
</dbReference>
<dbReference type="SUPFAM" id="SSF48179">
    <property type="entry name" value="6-phosphogluconate dehydrogenase C-terminal domain-like"/>
    <property type="match status" value="2"/>
</dbReference>
<dbReference type="SUPFAM" id="SSF51735">
    <property type="entry name" value="NAD(P)-binding Rossmann-fold domains"/>
    <property type="match status" value="1"/>
</dbReference>
<dbReference type="PROSITE" id="PS51851">
    <property type="entry name" value="KARI_C"/>
    <property type="match status" value="2"/>
</dbReference>
<dbReference type="PROSITE" id="PS51850">
    <property type="entry name" value="KARI_N"/>
    <property type="match status" value="1"/>
</dbReference>
<comment type="function">
    <text evidence="1">Involved in the biosynthesis of branched-chain amino acids (BCAA). Catalyzes an alkyl-migration followed by a ketol-acid reduction of (S)-2-acetolactate (S2AL) to yield (R)-2,3-dihydroxy-isovalerate. In the isomerase reaction, S2AL is rearranged via a Mg-dependent methyl migration to produce 3-hydroxy-3-methyl-2-ketobutyrate (HMKB). In the reductase reaction, this 2-ketoacid undergoes a metal-dependent reduction by NADPH to yield (R)-2,3-dihydroxy-isovalerate.</text>
</comment>
<comment type="catalytic activity">
    <reaction evidence="1">
        <text>(2R)-2,3-dihydroxy-3-methylbutanoate + NADP(+) = (2S)-2-acetolactate + NADPH + H(+)</text>
        <dbReference type="Rhea" id="RHEA:22068"/>
        <dbReference type="ChEBI" id="CHEBI:15378"/>
        <dbReference type="ChEBI" id="CHEBI:49072"/>
        <dbReference type="ChEBI" id="CHEBI:57783"/>
        <dbReference type="ChEBI" id="CHEBI:58349"/>
        <dbReference type="ChEBI" id="CHEBI:58476"/>
        <dbReference type="EC" id="1.1.1.86"/>
    </reaction>
</comment>
<comment type="catalytic activity">
    <reaction evidence="1">
        <text>(2R,3R)-2,3-dihydroxy-3-methylpentanoate + NADP(+) = (S)-2-ethyl-2-hydroxy-3-oxobutanoate + NADPH + H(+)</text>
        <dbReference type="Rhea" id="RHEA:13493"/>
        <dbReference type="ChEBI" id="CHEBI:15378"/>
        <dbReference type="ChEBI" id="CHEBI:49256"/>
        <dbReference type="ChEBI" id="CHEBI:49258"/>
        <dbReference type="ChEBI" id="CHEBI:57783"/>
        <dbReference type="ChEBI" id="CHEBI:58349"/>
        <dbReference type="EC" id="1.1.1.86"/>
    </reaction>
</comment>
<comment type="cofactor">
    <cofactor evidence="1">
        <name>Mg(2+)</name>
        <dbReference type="ChEBI" id="CHEBI:18420"/>
    </cofactor>
    <text evidence="1">Binds 2 magnesium ions per subunit.</text>
</comment>
<comment type="pathway">
    <text evidence="1">Amino-acid biosynthesis; L-isoleucine biosynthesis; L-isoleucine from 2-oxobutanoate: step 2/4.</text>
</comment>
<comment type="pathway">
    <text evidence="1">Amino-acid biosynthesis; L-valine biosynthesis; L-valine from pyruvate: step 2/4.</text>
</comment>
<comment type="similarity">
    <text evidence="1">Belongs to the ketol-acid reductoisomerase family.</text>
</comment>
<proteinExistence type="inferred from homology"/>
<organism>
    <name type="scientific">Photobacterium profundum (strain SS9)</name>
    <dbReference type="NCBI Taxonomy" id="298386"/>
    <lineage>
        <taxon>Bacteria</taxon>
        <taxon>Pseudomonadati</taxon>
        <taxon>Pseudomonadota</taxon>
        <taxon>Gammaproteobacteria</taxon>
        <taxon>Vibrionales</taxon>
        <taxon>Vibrionaceae</taxon>
        <taxon>Photobacterium</taxon>
    </lineage>
</organism>
<sequence>MANYFNTLNLRQQLDQLGRCRFMDRNEFATEADYLKGKKVVIVGCGAQGLNQGLNMRDSGLDVSYALRQAAIDEQRQSYKNAKENGFDVGSYEQLIPIADLVVNLTPDKQHSNVVETVMPLMKEGAALGYSHGFNIVEEGMQIRKDITVVMVAPKCPGTEVREEYKRGFGVPTLIAVHPENDPKGDGQEIAKAWAAATGGHRAGVLESSFVAEVKSDLMGEQTILCGMLQAGSIVCYEKMIADGIDAGYAGKLLQYGWETITEALKFGGITHMMDRLSNPAKVKAFELSEELKDLMRPLYNKHMDNIITGHFSSTMMADWANDDVNLLGWREETGETAFENYPVTDVEIPEQEYFDNGILMVAMVRAGVELAFEAMTASGIVEESAYYESLHELPLIANTVARKRLYEMNVVISDTAEYGNYLFANVATPLLREKFMTDVDTDVIGRGLGEVSNQVSNETLIVVNETLRSHPVELVGQELRGYMTDMKRIAVGD</sequence>
<evidence type="ECO:0000255" key="1">
    <source>
        <dbReference type="HAMAP-Rule" id="MF_00435"/>
    </source>
</evidence>
<evidence type="ECO:0000255" key="2">
    <source>
        <dbReference type="PROSITE-ProRule" id="PRU01197"/>
    </source>
</evidence>
<evidence type="ECO:0000255" key="3">
    <source>
        <dbReference type="PROSITE-ProRule" id="PRU01198"/>
    </source>
</evidence>
<keyword id="KW-0028">Amino-acid biosynthesis</keyword>
<keyword id="KW-0100">Branched-chain amino acid biosynthesis</keyword>
<keyword id="KW-0460">Magnesium</keyword>
<keyword id="KW-0479">Metal-binding</keyword>
<keyword id="KW-0521">NADP</keyword>
<keyword id="KW-0560">Oxidoreductase</keyword>
<keyword id="KW-1185">Reference proteome</keyword>
<keyword id="KW-0677">Repeat</keyword>
<reference key="1">
    <citation type="journal article" date="2005" name="Science">
        <title>Life at depth: Photobacterium profundum genome sequence and expression analysis.</title>
        <authorList>
            <person name="Vezzi A."/>
            <person name="Campanaro S."/>
            <person name="D'Angelo M."/>
            <person name="Simonato F."/>
            <person name="Vitulo N."/>
            <person name="Lauro F.M."/>
            <person name="Cestaro A."/>
            <person name="Malacrida G."/>
            <person name="Simionati B."/>
            <person name="Cannata N."/>
            <person name="Romualdi C."/>
            <person name="Bartlett D.H."/>
            <person name="Valle G."/>
        </authorList>
    </citation>
    <scope>NUCLEOTIDE SEQUENCE [LARGE SCALE GENOMIC DNA]</scope>
    <source>
        <strain>ATCC BAA-1253 / SS9</strain>
    </source>
</reference>
<accession>Q6LVZ5</accession>
<protein>
    <recommendedName>
        <fullName evidence="1">Ketol-acid reductoisomerase (NADP(+))</fullName>
        <shortName evidence="1">KARI</shortName>
        <ecNumber evidence="1">1.1.1.86</ecNumber>
    </recommendedName>
    <alternativeName>
        <fullName evidence="1">Acetohydroxy-acid isomeroreductase</fullName>
        <shortName evidence="1">AHIR</shortName>
    </alternativeName>
    <alternativeName>
        <fullName evidence="1">Alpha-keto-beta-hydroxylacyl reductoisomerase</fullName>
    </alternativeName>
    <alternativeName>
        <fullName evidence="1">Ketol-acid reductoisomerase type 2</fullName>
    </alternativeName>
    <alternativeName>
        <fullName evidence="1">Ketol-acid reductoisomerase type II</fullName>
    </alternativeName>
</protein>